<feature type="chain" id="PRO_0000148658" description="Argininosuccinate synthase">
    <location>
        <begin position="1"/>
        <end position="400"/>
    </location>
</feature>
<feature type="binding site" evidence="1 2 3">
    <location>
        <begin position="6"/>
        <end position="14"/>
    </location>
    <ligand>
        <name>ATP</name>
        <dbReference type="ChEBI" id="CHEBI:30616"/>
    </ligand>
</feature>
<feature type="binding site" evidence="1 2 3">
    <location>
        <position position="33"/>
    </location>
    <ligand>
        <name>ATP</name>
        <dbReference type="ChEBI" id="CHEBI:30616"/>
    </ligand>
</feature>
<feature type="binding site">
    <location>
        <position position="84"/>
    </location>
    <ligand>
        <name>L-citrulline</name>
        <dbReference type="ChEBI" id="CHEBI:57743"/>
    </ligand>
</feature>
<feature type="binding site">
    <location>
        <position position="89"/>
    </location>
    <ligand>
        <name>L-citrulline</name>
        <dbReference type="ChEBI" id="CHEBI:57743"/>
    </ligand>
</feature>
<feature type="binding site" evidence="1 2 3">
    <location>
        <position position="114"/>
    </location>
    <ligand>
        <name>ATP</name>
        <dbReference type="ChEBI" id="CHEBI:30616"/>
    </ligand>
</feature>
<feature type="binding site">
    <location>
        <position position="116"/>
    </location>
    <ligand>
        <name>L-aspartate</name>
        <dbReference type="ChEBI" id="CHEBI:29991"/>
    </ligand>
</feature>
<feature type="binding site">
    <location>
        <position position="120"/>
    </location>
    <ligand>
        <name>L-aspartate</name>
        <dbReference type="ChEBI" id="CHEBI:29991"/>
    </ligand>
</feature>
<feature type="binding site">
    <location>
        <position position="120"/>
    </location>
    <ligand>
        <name>L-citrulline</name>
        <dbReference type="ChEBI" id="CHEBI:57743"/>
    </ligand>
</feature>
<feature type="binding site">
    <location>
        <position position="121"/>
    </location>
    <ligand>
        <name>L-aspartate</name>
        <dbReference type="ChEBI" id="CHEBI:29991"/>
    </ligand>
</feature>
<feature type="binding site">
    <location>
        <position position="124"/>
    </location>
    <ligand>
        <name>L-citrulline</name>
        <dbReference type="ChEBI" id="CHEBI:57743"/>
    </ligand>
</feature>
<feature type="binding site">
    <location>
        <position position="173"/>
    </location>
    <ligand>
        <name>L-citrulline</name>
        <dbReference type="ChEBI" id="CHEBI:57743"/>
    </ligand>
</feature>
<feature type="binding site">
    <location>
        <position position="182"/>
    </location>
    <ligand>
        <name>L-citrulline</name>
        <dbReference type="ChEBI" id="CHEBI:57743"/>
    </ligand>
</feature>
<feature type="binding site">
    <location>
        <position position="258"/>
    </location>
    <ligand>
        <name>L-citrulline</name>
        <dbReference type="ChEBI" id="CHEBI:57743"/>
    </ligand>
</feature>
<feature type="binding site">
    <location>
        <position position="270"/>
    </location>
    <ligand>
        <name>L-citrulline</name>
        <dbReference type="ChEBI" id="CHEBI:57743"/>
    </ligand>
</feature>
<feature type="strand" evidence="6">
    <location>
        <begin position="2"/>
        <end position="6"/>
    </location>
</feature>
<feature type="helix" evidence="6">
    <location>
        <begin position="11"/>
        <end position="24"/>
    </location>
</feature>
<feature type="strand" evidence="6">
    <location>
        <begin position="27"/>
        <end position="36"/>
    </location>
</feature>
<feature type="helix" evidence="6">
    <location>
        <begin position="41"/>
        <end position="51"/>
    </location>
</feature>
<feature type="strand" evidence="6">
    <location>
        <begin position="54"/>
        <end position="60"/>
    </location>
</feature>
<feature type="helix" evidence="6">
    <location>
        <begin position="62"/>
        <end position="68"/>
    </location>
</feature>
<feature type="helix" evidence="6">
    <location>
        <begin position="70"/>
        <end position="75"/>
    </location>
</feature>
<feature type="turn" evidence="6">
    <location>
        <begin position="81"/>
        <end position="83"/>
    </location>
</feature>
<feature type="turn" evidence="6">
    <location>
        <begin position="87"/>
        <end position="90"/>
    </location>
</feature>
<feature type="helix" evidence="6">
    <location>
        <begin position="91"/>
        <end position="106"/>
    </location>
</feature>
<feature type="strand" evidence="6">
    <location>
        <begin position="109"/>
        <end position="112"/>
    </location>
</feature>
<feature type="strand" evidence="5">
    <location>
        <begin position="117"/>
        <end position="120"/>
    </location>
</feature>
<feature type="helix" evidence="6">
    <location>
        <begin position="121"/>
        <end position="132"/>
    </location>
</feature>
<feature type="strand" evidence="6">
    <location>
        <begin position="137"/>
        <end position="139"/>
    </location>
</feature>
<feature type="helix" evidence="6">
    <location>
        <begin position="141"/>
        <end position="143"/>
    </location>
</feature>
<feature type="helix" evidence="6">
    <location>
        <begin position="150"/>
        <end position="159"/>
    </location>
</feature>
<feature type="strand" evidence="6">
    <location>
        <begin position="173"/>
        <end position="176"/>
    </location>
</feature>
<feature type="strand" evidence="6">
    <location>
        <begin position="181"/>
        <end position="185"/>
    </location>
</feature>
<feature type="helix" evidence="6">
    <location>
        <begin position="186"/>
        <end position="189"/>
    </location>
</feature>
<feature type="strand" evidence="6">
    <location>
        <begin position="201"/>
        <end position="203"/>
    </location>
</feature>
<feature type="helix" evidence="6">
    <location>
        <begin position="206"/>
        <end position="208"/>
    </location>
</feature>
<feature type="strand" evidence="6">
    <location>
        <begin position="214"/>
        <end position="221"/>
    </location>
</feature>
<feature type="strand" evidence="6">
    <location>
        <begin position="224"/>
        <end position="228"/>
    </location>
</feature>
<feature type="helix" evidence="6">
    <location>
        <begin position="235"/>
        <end position="248"/>
    </location>
</feature>
<feature type="strand" evidence="6">
    <location>
        <begin position="253"/>
        <end position="259"/>
    </location>
</feature>
<feature type="strand" evidence="6">
    <location>
        <begin position="265"/>
        <end position="271"/>
    </location>
</feature>
<feature type="helix" evidence="6">
    <location>
        <begin position="273"/>
        <end position="289"/>
    </location>
</feature>
<feature type="helix" evidence="6">
    <location>
        <begin position="292"/>
        <end position="311"/>
    </location>
</feature>
<feature type="strand" evidence="6">
    <location>
        <begin position="314"/>
        <end position="316"/>
    </location>
</feature>
<feature type="helix" evidence="6">
    <location>
        <begin position="317"/>
        <end position="330"/>
    </location>
</feature>
<feature type="strand" evidence="6">
    <location>
        <begin position="335"/>
        <end position="342"/>
    </location>
</feature>
<feature type="strand" evidence="6">
    <location>
        <begin position="345"/>
        <end position="352"/>
    </location>
</feature>
<feature type="helix" evidence="6">
    <location>
        <begin position="360"/>
        <end position="362"/>
    </location>
</feature>
<feature type="helix" evidence="6">
    <location>
        <begin position="373"/>
        <end position="394"/>
    </location>
</feature>
<reference key="1">
    <citation type="submission" date="2004-11" db="EMBL/GenBank/DDBJ databases">
        <title>Complete genome sequence of Thermus thermophilus HB8.</title>
        <authorList>
            <person name="Masui R."/>
            <person name="Kurokawa K."/>
            <person name="Nakagawa N."/>
            <person name="Tokunaga F."/>
            <person name="Koyama Y."/>
            <person name="Shibata T."/>
            <person name="Oshima T."/>
            <person name="Yokoyama S."/>
            <person name="Yasunaga T."/>
            <person name="Kuramitsu S."/>
        </authorList>
    </citation>
    <scope>NUCLEOTIDE SEQUENCE [LARGE SCALE GENOMIC DNA]</scope>
    <source>
        <strain>ATCC 27634 / DSM 579 / HB8</strain>
    </source>
</reference>
<reference key="2">
    <citation type="journal article" date="2002" name="J. Biol. Chem.">
        <title>Crystal structure of argininosuccinate synthetase from Thermus thermophilus HB8. Structural basis for the catalytic action.</title>
        <authorList>
            <person name="Goto M."/>
            <person name="Nakajima Y."/>
            <person name="Hirotsu K."/>
        </authorList>
    </citation>
    <scope>X-RAY CRYSTALLOGRAPHY (1.95 ANGSTROMS) IN COMPLEX WITH ATP AND SUBSTRATE ANALOGS</scope>
    <scope>SUBUNIT</scope>
</reference>
<reference key="3">
    <citation type="journal article" date="2003" name="J. Biol. Chem.">
        <title>Structures of argininosuccinate synthetase in enzyme-ATP substrates and enzyme-AMP product forms: stereochemistry of the catalytic reaction.</title>
        <authorList>
            <person name="Goto M."/>
            <person name="Omi R."/>
            <person name="Miyahara I."/>
            <person name="Sugahara M."/>
            <person name="Hirotsu K."/>
        </authorList>
    </citation>
    <scope>X-RAY CRYSTALLOGRAPHY (2.1 ANGSTROMS) IN COMPLEX WITH ATP AND SUBSTRATES</scope>
    <scope>SUBUNIT</scope>
</reference>
<evidence type="ECO:0000255" key="1">
    <source>
        <dbReference type="HAMAP-Rule" id="MF_00005"/>
    </source>
</evidence>
<evidence type="ECO:0000269" key="2">
    <source>
    </source>
</evidence>
<evidence type="ECO:0000269" key="3">
    <source>
    </source>
</evidence>
<evidence type="ECO:0000305" key="4"/>
<evidence type="ECO:0007829" key="5">
    <source>
        <dbReference type="PDB" id="1J21"/>
    </source>
</evidence>
<evidence type="ECO:0007829" key="6">
    <source>
        <dbReference type="PDB" id="1KOR"/>
    </source>
</evidence>
<accession>P59846</accession>
<accession>Q5SLK9</accession>
<gene>
    <name evidence="1" type="primary">argG</name>
    <name type="ordered locus">TTHA0284</name>
</gene>
<comment type="catalytic activity">
    <reaction evidence="1">
        <text>L-citrulline + L-aspartate + ATP = 2-(N(omega)-L-arginino)succinate + AMP + diphosphate + H(+)</text>
        <dbReference type="Rhea" id="RHEA:10932"/>
        <dbReference type="ChEBI" id="CHEBI:15378"/>
        <dbReference type="ChEBI" id="CHEBI:29991"/>
        <dbReference type="ChEBI" id="CHEBI:30616"/>
        <dbReference type="ChEBI" id="CHEBI:33019"/>
        <dbReference type="ChEBI" id="CHEBI:57472"/>
        <dbReference type="ChEBI" id="CHEBI:57743"/>
        <dbReference type="ChEBI" id="CHEBI:456215"/>
        <dbReference type="EC" id="6.3.4.5"/>
    </reaction>
</comment>
<comment type="pathway">
    <text evidence="1">Amino-acid biosynthesis; L-arginine biosynthesis; L-arginine from L-ornithine and carbamoyl phosphate: step 2/3.</text>
</comment>
<comment type="subunit">
    <text evidence="1 2 3">Homotetramer.</text>
</comment>
<comment type="subcellular location">
    <subcellularLocation>
        <location evidence="4">Cytoplasm</location>
    </subcellularLocation>
</comment>
<comment type="similarity">
    <text evidence="1">Belongs to the argininosuccinate synthase family. Type 1 subfamily.</text>
</comment>
<keyword id="KW-0002">3D-structure</keyword>
<keyword id="KW-0028">Amino-acid biosynthesis</keyword>
<keyword id="KW-0055">Arginine biosynthesis</keyword>
<keyword id="KW-0067">ATP-binding</keyword>
<keyword id="KW-0963">Cytoplasm</keyword>
<keyword id="KW-0436">Ligase</keyword>
<keyword id="KW-0547">Nucleotide-binding</keyword>
<keyword id="KW-1185">Reference proteome</keyword>
<name>ASSY_THET8</name>
<dbReference type="EC" id="6.3.4.5" evidence="1"/>
<dbReference type="EMBL" id="AP008226">
    <property type="protein sequence ID" value="BAD70107.1"/>
    <property type="molecule type" value="Genomic_DNA"/>
</dbReference>
<dbReference type="RefSeq" id="WP_011227831.1">
    <property type="nucleotide sequence ID" value="NC_006461.1"/>
</dbReference>
<dbReference type="RefSeq" id="YP_143550.1">
    <property type="nucleotide sequence ID" value="NC_006461.1"/>
</dbReference>
<dbReference type="PDB" id="1J1Z">
    <property type="method" value="X-ray"/>
    <property type="resolution" value="2.10 A"/>
    <property type="chains" value="A/B/C/D=1-400"/>
</dbReference>
<dbReference type="PDB" id="1J20">
    <property type="method" value="X-ray"/>
    <property type="resolution" value="2.00 A"/>
    <property type="chains" value="A/B/C/D=1-400"/>
</dbReference>
<dbReference type="PDB" id="1J21">
    <property type="method" value="X-ray"/>
    <property type="resolution" value="2.20 A"/>
    <property type="chains" value="A/B/C/D=1-400"/>
</dbReference>
<dbReference type="PDB" id="1KH1">
    <property type="method" value="X-ray"/>
    <property type="resolution" value="2.30 A"/>
    <property type="chains" value="A/B/C/D=1-400"/>
</dbReference>
<dbReference type="PDB" id="1KH2">
    <property type="method" value="X-ray"/>
    <property type="resolution" value="2.30 A"/>
    <property type="chains" value="A/B/C/D=1-400"/>
</dbReference>
<dbReference type="PDB" id="1KH3">
    <property type="method" value="X-ray"/>
    <property type="resolution" value="2.15 A"/>
    <property type="chains" value="A/B/C/D=1-400"/>
</dbReference>
<dbReference type="PDB" id="1KOR">
    <property type="method" value="X-ray"/>
    <property type="resolution" value="1.95 A"/>
    <property type="chains" value="A/B/C/D=1-400"/>
</dbReference>
<dbReference type="PDBsum" id="1J1Z"/>
<dbReference type="PDBsum" id="1J20"/>
<dbReference type="PDBsum" id="1J21"/>
<dbReference type="PDBsum" id="1KH1"/>
<dbReference type="PDBsum" id="1KH2"/>
<dbReference type="PDBsum" id="1KH3"/>
<dbReference type="PDBsum" id="1KOR"/>
<dbReference type="SMR" id="P59846"/>
<dbReference type="DrugBank" id="DB02267">
    <property type="generic name" value="Argininosuccinate"/>
</dbReference>
<dbReference type="DrugBank" id="DB04395">
    <property type="generic name" value="Phosphoaminophosphonic Acid-Adenylate Ester"/>
</dbReference>
<dbReference type="EnsemblBacteria" id="BAD70107">
    <property type="protein sequence ID" value="BAD70107"/>
    <property type="gene ID" value="BAD70107"/>
</dbReference>
<dbReference type="GeneID" id="3168176"/>
<dbReference type="KEGG" id="ttj:TTHA0284"/>
<dbReference type="PATRIC" id="fig|300852.9.peg.284"/>
<dbReference type="eggNOG" id="COG0137">
    <property type="taxonomic scope" value="Bacteria"/>
</dbReference>
<dbReference type="HOGENOM" id="CLU_032784_4_2_0"/>
<dbReference type="PhylomeDB" id="P59846"/>
<dbReference type="BRENDA" id="6.3.4.5">
    <property type="organism ID" value="2305"/>
</dbReference>
<dbReference type="UniPathway" id="UPA00068">
    <property type="reaction ID" value="UER00113"/>
</dbReference>
<dbReference type="EvolutionaryTrace" id="P59846"/>
<dbReference type="Proteomes" id="UP000000532">
    <property type="component" value="Chromosome"/>
</dbReference>
<dbReference type="GO" id="GO:0005737">
    <property type="term" value="C:cytoplasm"/>
    <property type="evidence" value="ECO:0007669"/>
    <property type="project" value="UniProtKB-SubCell"/>
</dbReference>
<dbReference type="GO" id="GO:0004055">
    <property type="term" value="F:argininosuccinate synthase activity"/>
    <property type="evidence" value="ECO:0007669"/>
    <property type="project" value="UniProtKB-UniRule"/>
</dbReference>
<dbReference type="GO" id="GO:0005524">
    <property type="term" value="F:ATP binding"/>
    <property type="evidence" value="ECO:0007669"/>
    <property type="project" value="UniProtKB-UniRule"/>
</dbReference>
<dbReference type="GO" id="GO:0000053">
    <property type="term" value="P:argininosuccinate metabolic process"/>
    <property type="evidence" value="ECO:0007669"/>
    <property type="project" value="TreeGrafter"/>
</dbReference>
<dbReference type="GO" id="GO:0006526">
    <property type="term" value="P:L-arginine biosynthetic process"/>
    <property type="evidence" value="ECO:0007669"/>
    <property type="project" value="UniProtKB-UniRule"/>
</dbReference>
<dbReference type="GO" id="GO:0000050">
    <property type="term" value="P:urea cycle"/>
    <property type="evidence" value="ECO:0007669"/>
    <property type="project" value="TreeGrafter"/>
</dbReference>
<dbReference type="CDD" id="cd01999">
    <property type="entry name" value="ASS"/>
    <property type="match status" value="1"/>
</dbReference>
<dbReference type="FunFam" id="3.40.50.620:FF:000019">
    <property type="entry name" value="Argininosuccinate synthase"/>
    <property type="match status" value="1"/>
</dbReference>
<dbReference type="FunFam" id="3.90.1260.10:FF:000007">
    <property type="entry name" value="Argininosuccinate synthase"/>
    <property type="match status" value="1"/>
</dbReference>
<dbReference type="Gene3D" id="3.90.1260.10">
    <property type="entry name" value="Argininosuccinate synthetase, chain A, domain 2"/>
    <property type="match status" value="1"/>
</dbReference>
<dbReference type="Gene3D" id="3.40.50.620">
    <property type="entry name" value="HUPs"/>
    <property type="match status" value="1"/>
</dbReference>
<dbReference type="Gene3D" id="1.20.5.470">
    <property type="entry name" value="Single helix bin"/>
    <property type="match status" value="1"/>
</dbReference>
<dbReference type="HAMAP" id="MF_00005">
    <property type="entry name" value="Arg_succ_synth_type1"/>
    <property type="match status" value="1"/>
</dbReference>
<dbReference type="InterPro" id="IPR048268">
    <property type="entry name" value="Arginosuc_syn_C"/>
</dbReference>
<dbReference type="InterPro" id="IPR048267">
    <property type="entry name" value="Arginosuc_syn_N"/>
</dbReference>
<dbReference type="InterPro" id="IPR001518">
    <property type="entry name" value="Arginosuc_synth"/>
</dbReference>
<dbReference type="InterPro" id="IPR018223">
    <property type="entry name" value="Arginosuc_synth_CS"/>
</dbReference>
<dbReference type="InterPro" id="IPR023434">
    <property type="entry name" value="Arginosuc_synth_type_1_subfam"/>
</dbReference>
<dbReference type="InterPro" id="IPR024074">
    <property type="entry name" value="AS_cat/multimer_dom_body"/>
</dbReference>
<dbReference type="InterPro" id="IPR014729">
    <property type="entry name" value="Rossmann-like_a/b/a_fold"/>
</dbReference>
<dbReference type="NCBIfam" id="TIGR00032">
    <property type="entry name" value="argG"/>
    <property type="match status" value="1"/>
</dbReference>
<dbReference type="NCBIfam" id="NF001770">
    <property type="entry name" value="PRK00509.1"/>
    <property type="match status" value="1"/>
</dbReference>
<dbReference type="PANTHER" id="PTHR11587">
    <property type="entry name" value="ARGININOSUCCINATE SYNTHASE"/>
    <property type="match status" value="1"/>
</dbReference>
<dbReference type="PANTHER" id="PTHR11587:SF2">
    <property type="entry name" value="ARGININOSUCCINATE SYNTHASE"/>
    <property type="match status" value="1"/>
</dbReference>
<dbReference type="Pfam" id="PF20979">
    <property type="entry name" value="Arginosuc_syn_C"/>
    <property type="match status" value="1"/>
</dbReference>
<dbReference type="Pfam" id="PF00764">
    <property type="entry name" value="Arginosuc_synth"/>
    <property type="match status" value="1"/>
</dbReference>
<dbReference type="SUPFAM" id="SSF52402">
    <property type="entry name" value="Adenine nucleotide alpha hydrolases-like"/>
    <property type="match status" value="1"/>
</dbReference>
<dbReference type="SUPFAM" id="SSF69864">
    <property type="entry name" value="Argininosuccinate synthetase, C-terminal domain"/>
    <property type="match status" value="1"/>
</dbReference>
<dbReference type="PROSITE" id="PS00564">
    <property type="entry name" value="ARGININOSUCCIN_SYN_1"/>
    <property type="match status" value="1"/>
</dbReference>
<dbReference type="PROSITE" id="PS00565">
    <property type="entry name" value="ARGININOSUCCIN_SYN_2"/>
    <property type="match status" value="1"/>
</dbReference>
<sequence length="400" mass="44816">MKIVLAYSGGLDTSIILKWLKETYRAEVIAFTADIGQGEEVEEAREKALRTGASKAIALDLKEEFVRDFVFPMMRAGAVYEGYYLLGTSIARPLIAKHLVRIAEEEGAEAIAHGATGKGNDQVRFELTAYALKPDIKVIAPWREWSFQGRKEMIAYAEAHGIPVPVTQEKPYSMDANLLHISYEGGVLEDPWAEPPKGMFRMTQDPEEAPDAPEYVEVEFFEGDPVAVNGERLSPAALLQRLNEIGGRHGVGRVDIVENRFVGMKSRGVYETPGGTILYHARRAVESLTLDREVLHQRDMLSPKYAELVYYGFWYAPEREALQAYFDHVARSVTGVARLKLYKGNVYVVGRKAPKSLYRQDLVSFDEAGGYDQKDAEGFIKIQALRLRVRALVEREGHGA</sequence>
<protein>
    <recommendedName>
        <fullName evidence="1">Argininosuccinate synthase</fullName>
        <ecNumber evidence="1">6.3.4.5</ecNumber>
    </recommendedName>
    <alternativeName>
        <fullName evidence="1">Citrulline--aspartate ligase</fullName>
    </alternativeName>
</protein>
<organism>
    <name type="scientific">Thermus thermophilus (strain ATCC 27634 / DSM 579 / HB8)</name>
    <dbReference type="NCBI Taxonomy" id="300852"/>
    <lineage>
        <taxon>Bacteria</taxon>
        <taxon>Thermotogati</taxon>
        <taxon>Deinococcota</taxon>
        <taxon>Deinococci</taxon>
        <taxon>Thermales</taxon>
        <taxon>Thermaceae</taxon>
        <taxon>Thermus</taxon>
    </lineage>
</organism>
<proteinExistence type="evidence at protein level"/>